<dbReference type="EC" id="2.5.1.39" evidence="1 7"/>
<dbReference type="EMBL" id="M81698">
    <property type="protein sequence ID" value="AAA34507.1"/>
    <property type="molecule type" value="Genomic_DNA"/>
</dbReference>
<dbReference type="EMBL" id="Z71656">
    <property type="protein sequence ID" value="CAA96321.1"/>
    <property type="molecule type" value="Genomic_DNA"/>
</dbReference>
<dbReference type="EMBL" id="AY693097">
    <property type="protein sequence ID" value="AAT93116.1"/>
    <property type="molecule type" value="Genomic_DNA"/>
</dbReference>
<dbReference type="EMBL" id="BK006947">
    <property type="protein sequence ID" value="DAA10583.1"/>
    <property type="molecule type" value="Genomic_DNA"/>
</dbReference>
<dbReference type="PIR" id="S20056">
    <property type="entry name" value="S20056"/>
</dbReference>
<dbReference type="RefSeq" id="NP_014439.3">
    <property type="nucleotide sequence ID" value="NM_001183218.3"/>
</dbReference>
<dbReference type="SMR" id="P32378"/>
<dbReference type="BioGRID" id="35867">
    <property type="interactions" value="333"/>
</dbReference>
<dbReference type="DIP" id="DIP-4655N"/>
<dbReference type="FunCoup" id="P32378">
    <property type="interactions" value="456"/>
</dbReference>
<dbReference type="IntAct" id="P32378">
    <property type="interactions" value="5"/>
</dbReference>
<dbReference type="MINT" id="P32378"/>
<dbReference type="STRING" id="4932.YNR041C"/>
<dbReference type="iPTMnet" id="P32378"/>
<dbReference type="PaxDb" id="4932-YNR041C"/>
<dbReference type="PeptideAtlas" id="P32378"/>
<dbReference type="EnsemblFungi" id="YNR041C_mRNA">
    <property type="protein sequence ID" value="YNR041C"/>
    <property type="gene ID" value="YNR041C"/>
</dbReference>
<dbReference type="GeneID" id="855778"/>
<dbReference type="KEGG" id="sce:YNR041C"/>
<dbReference type="AGR" id="SGD:S000005324"/>
<dbReference type="SGD" id="S000005324">
    <property type="gene designation" value="COQ2"/>
</dbReference>
<dbReference type="VEuPathDB" id="FungiDB:YNR041C"/>
<dbReference type="eggNOG" id="KOG1381">
    <property type="taxonomic scope" value="Eukaryota"/>
</dbReference>
<dbReference type="GeneTree" id="ENSGT00940000153771"/>
<dbReference type="HOGENOM" id="CLU_034879_2_2_1"/>
<dbReference type="InParanoid" id="P32378"/>
<dbReference type="OMA" id="WCMIYDT"/>
<dbReference type="OrthoDB" id="18170at2759"/>
<dbReference type="BioCyc" id="MetaCyc:YNR041C-MONOMER"/>
<dbReference type="BioCyc" id="YEAST:YNR041C-MONOMER"/>
<dbReference type="BRENDA" id="2.5.1.39">
    <property type="organism ID" value="984"/>
</dbReference>
<dbReference type="Reactome" id="R-SCE-2142789">
    <property type="pathway name" value="Ubiquinol biosynthesis"/>
</dbReference>
<dbReference type="UniPathway" id="UPA00232"/>
<dbReference type="BioGRID-ORCS" id="855778">
    <property type="hits" value="0 hits in 10 CRISPR screens"/>
</dbReference>
<dbReference type="PRO" id="PR:P32378"/>
<dbReference type="Proteomes" id="UP000002311">
    <property type="component" value="Chromosome XIV"/>
</dbReference>
<dbReference type="RNAct" id="P32378">
    <property type="molecule type" value="protein"/>
</dbReference>
<dbReference type="GO" id="GO:0005743">
    <property type="term" value="C:mitochondrial inner membrane"/>
    <property type="evidence" value="ECO:0000318"/>
    <property type="project" value="GO_Central"/>
</dbReference>
<dbReference type="GO" id="GO:0005758">
    <property type="term" value="C:mitochondrial intermembrane space"/>
    <property type="evidence" value="ECO:0000304"/>
    <property type="project" value="Reactome"/>
</dbReference>
<dbReference type="GO" id="GO:0031966">
    <property type="term" value="C:mitochondrial membrane"/>
    <property type="evidence" value="ECO:0000314"/>
    <property type="project" value="SGD"/>
</dbReference>
<dbReference type="GO" id="GO:0005739">
    <property type="term" value="C:mitochondrion"/>
    <property type="evidence" value="ECO:0000314"/>
    <property type="project" value="SGD"/>
</dbReference>
<dbReference type="GO" id="GO:0008412">
    <property type="term" value="F:4-hydroxybenzoate polyprenyltransferase activity"/>
    <property type="evidence" value="ECO:0000315"/>
    <property type="project" value="SGD"/>
</dbReference>
<dbReference type="GO" id="GO:0008299">
    <property type="term" value="P:isoprenoid biosynthetic process"/>
    <property type="evidence" value="ECO:0007669"/>
    <property type="project" value="UniProtKB-UniRule"/>
</dbReference>
<dbReference type="GO" id="GO:0006744">
    <property type="term" value="P:ubiquinone biosynthetic process"/>
    <property type="evidence" value="ECO:0000315"/>
    <property type="project" value="SGD"/>
</dbReference>
<dbReference type="CDD" id="cd13959">
    <property type="entry name" value="PT_UbiA_COQ2"/>
    <property type="match status" value="1"/>
</dbReference>
<dbReference type="FunFam" id="1.20.120.1780:FF:000001">
    <property type="entry name" value="4-hydroxybenzoate octaprenyltransferase"/>
    <property type="match status" value="1"/>
</dbReference>
<dbReference type="FunFam" id="1.10.357.140:FF:000003">
    <property type="entry name" value="4-hydroxybenzoate polyprenyltransferase, mitochondrial"/>
    <property type="match status" value="1"/>
</dbReference>
<dbReference type="Gene3D" id="1.10.357.140">
    <property type="entry name" value="UbiA prenyltransferase"/>
    <property type="match status" value="1"/>
</dbReference>
<dbReference type="Gene3D" id="1.20.120.1780">
    <property type="entry name" value="UbiA prenyltransferase"/>
    <property type="match status" value="1"/>
</dbReference>
<dbReference type="HAMAP" id="MF_01635">
    <property type="entry name" value="UbiA"/>
    <property type="match status" value="1"/>
</dbReference>
<dbReference type="InterPro" id="IPR006370">
    <property type="entry name" value="HB_polyprenyltransferase-like"/>
</dbReference>
<dbReference type="InterPro" id="IPR039653">
    <property type="entry name" value="Prenyltransferase"/>
</dbReference>
<dbReference type="InterPro" id="IPR000537">
    <property type="entry name" value="UbiA_prenyltransferase"/>
</dbReference>
<dbReference type="InterPro" id="IPR030470">
    <property type="entry name" value="UbiA_prenylTrfase_CS"/>
</dbReference>
<dbReference type="InterPro" id="IPR044878">
    <property type="entry name" value="UbiA_sf"/>
</dbReference>
<dbReference type="NCBIfam" id="TIGR01474">
    <property type="entry name" value="ubiA_proteo"/>
    <property type="match status" value="1"/>
</dbReference>
<dbReference type="PANTHER" id="PTHR11048:SF28">
    <property type="entry name" value="4-HYDROXYBENZOATE POLYPRENYLTRANSFERASE, MITOCHONDRIAL"/>
    <property type="match status" value="1"/>
</dbReference>
<dbReference type="PANTHER" id="PTHR11048">
    <property type="entry name" value="PRENYLTRANSFERASES"/>
    <property type="match status" value="1"/>
</dbReference>
<dbReference type="Pfam" id="PF01040">
    <property type="entry name" value="UbiA"/>
    <property type="match status" value="1"/>
</dbReference>
<dbReference type="PROSITE" id="PS00943">
    <property type="entry name" value="UBIA"/>
    <property type="match status" value="1"/>
</dbReference>
<accession>P32378</accession>
<accession>D6W1L7</accession>
<accession>Q6B1I3</accession>
<gene>
    <name evidence="1 5" type="primary">COQ2</name>
    <name evidence="8" type="ordered locus">YNR041C</name>
    <name type="ORF">N3419</name>
</gene>
<comment type="function">
    <text evidence="1 3">Catalyzes the prenylation of para-hydroxybenzoate (PHB) with an all-trans polyprenyl group. Mediates the second step in the final reaction sequence of coenzyme Q (CoQ) biosynthesis, which is the condensation of the polyisoprenoid side chain with PHB, generating the first membrane-bound Q intermediate.</text>
</comment>
<comment type="catalytic activity">
    <reaction evidence="1 7">
        <text>an all-trans-polyprenyl diphosphate + 4-hydroxybenzoate = a 4-hydroxy-3-(all-trans-polyprenyl)benzoate + diphosphate</text>
        <dbReference type="Rhea" id="RHEA:44504"/>
        <dbReference type="Rhea" id="RHEA-COMP:9514"/>
        <dbReference type="Rhea" id="RHEA-COMP:9564"/>
        <dbReference type="ChEBI" id="CHEBI:17879"/>
        <dbReference type="ChEBI" id="CHEBI:33019"/>
        <dbReference type="ChEBI" id="CHEBI:58914"/>
        <dbReference type="ChEBI" id="CHEBI:78396"/>
        <dbReference type="EC" id="2.5.1.39"/>
    </reaction>
</comment>
<comment type="cofactor">
    <cofactor evidence="1 3">
        <name>Mg(2+)</name>
        <dbReference type="ChEBI" id="CHEBI:18420"/>
    </cofactor>
</comment>
<comment type="pathway">
    <text evidence="1 7">Cofactor biosynthesis; ubiquinone biosynthesis.</text>
</comment>
<comment type="subcellular location">
    <subcellularLocation>
        <location evidence="1 2 4">Mitochondrion inner membrane</location>
        <topology evidence="1">Multi-pass membrane protein</topology>
        <orientation evidence="1 4">Matrix side</orientation>
    </subcellularLocation>
</comment>
<comment type="similarity">
    <text evidence="1 6">Belongs to the UbiA prenyltransferase family.</text>
</comment>
<feature type="transit peptide" description="Mitochondrion" evidence="1">
    <location>
        <begin position="1"/>
        <end position="42"/>
    </location>
</feature>
<feature type="chain" id="PRO_0000035921" description="4-hydroxybenzoate polyprenyltransferase, mitochondrial" evidence="1">
    <location>
        <begin position="43"/>
        <end position="372"/>
    </location>
</feature>
<feature type="transmembrane region" description="Helical" evidence="1">
    <location>
        <begin position="92"/>
        <end position="112"/>
    </location>
</feature>
<feature type="transmembrane region" description="Helical" evidence="1">
    <location>
        <begin position="114"/>
        <end position="134"/>
    </location>
</feature>
<feature type="transmembrane region" description="Helical" evidence="1">
    <location>
        <begin position="171"/>
        <end position="191"/>
    </location>
</feature>
<feature type="transmembrane region" description="Helical" evidence="1">
    <location>
        <begin position="193"/>
        <end position="213"/>
    </location>
</feature>
<feature type="transmembrane region" description="Helical" evidence="1">
    <location>
        <begin position="229"/>
        <end position="249"/>
    </location>
</feature>
<feature type="transmembrane region" description="Helical" evidence="1">
    <location>
        <begin position="298"/>
        <end position="318"/>
    </location>
</feature>
<feature type="transmembrane region" description="Helical" evidence="1">
    <location>
        <begin position="352"/>
        <end position="372"/>
    </location>
</feature>
<feature type="sequence conflict" description="In Ref. 4; AAT93116." evidence="6" ref="4">
    <original>A</original>
    <variation>T</variation>
    <location>
        <position position="273"/>
    </location>
</feature>
<organism>
    <name type="scientific">Saccharomyces cerevisiae (strain ATCC 204508 / S288c)</name>
    <name type="common">Baker's yeast</name>
    <dbReference type="NCBI Taxonomy" id="559292"/>
    <lineage>
        <taxon>Eukaryota</taxon>
        <taxon>Fungi</taxon>
        <taxon>Dikarya</taxon>
        <taxon>Ascomycota</taxon>
        <taxon>Saccharomycotina</taxon>
        <taxon>Saccharomycetes</taxon>
        <taxon>Saccharomycetales</taxon>
        <taxon>Saccharomycetaceae</taxon>
        <taxon>Saccharomyces</taxon>
    </lineage>
</organism>
<sequence>MFIWQRKSILLGRSILGSGRVTVAGIIGSSRKRYTSSSSSSSSPSSKESAPVFTSKELEVARKERLDGLGPFVSRLPKKWIPYAELMRLEKPVGTWLLYLPCSWSILMGAMMQGATLSATAGMLGIFGVGALVMRGAGCTINDFLDRKLDQRVIRSVERPIASGRVSPRRALVFLGAQTLVGMGVLSLLPAQCWWLGLASLPIVFTYPLFKRFTYYPQAALSACFNWGALLGFPAMGVMSWPTMIPLYLSSYLWCMTYDTIYAHQDKKFDIKAGIKSTALAWGPRTKSIMKAMSASQIALLAVAGLNSGLLWGPGFIGGLGVFAYRLFSMIKKVDLDNPKNCWKYFNANINTGLYFTYALAVDYILRLFGFL</sequence>
<protein>
    <recommendedName>
        <fullName evidence="1 6">4-hydroxybenzoate polyprenyltransferase, mitochondrial</fullName>
        <shortName evidence="1">4-HB polyprenyltransferase</shortName>
        <ecNumber evidence="1 7">2.5.1.39</ecNumber>
    </recommendedName>
    <alternativeName>
        <fullName evidence="1">4-hydroxybenzoate hexaprenyltransferase</fullName>
    </alternativeName>
    <alternativeName>
        <fullName evidence="1 5">Para-hydroxybenzoate--polyprenyltransferase</fullName>
        <shortName evidence="1">PHB:PPT</shortName>
        <shortName evidence="1 5">PHB:polyprenyltransferase</shortName>
    </alternativeName>
</protein>
<keyword id="KW-0414">Isoprene biosynthesis</keyword>
<keyword id="KW-0472">Membrane</keyword>
<keyword id="KW-0496">Mitochondrion</keyword>
<keyword id="KW-0999">Mitochondrion inner membrane</keyword>
<keyword id="KW-1185">Reference proteome</keyword>
<keyword id="KW-0808">Transferase</keyword>
<keyword id="KW-0809">Transit peptide</keyword>
<keyword id="KW-0812">Transmembrane</keyword>
<keyword id="KW-1133">Transmembrane helix</keyword>
<keyword id="KW-0831">Ubiquinone biosynthesis</keyword>
<proteinExistence type="evidence at protein level"/>
<reference key="1">
    <citation type="journal article" date="1992" name="J. Biol. Chem.">
        <title>COQ2 is a candidate for the structural gene encoding para-hydroxybenzoate:polyprenyltransferase.</title>
        <authorList>
            <person name="Ashby M.N."/>
            <person name="Kutsunai S.Y."/>
            <person name="Ackerman S."/>
            <person name="Tzagoloff A."/>
            <person name="Edwards P.A."/>
        </authorList>
    </citation>
    <scope>NUCLEOTIDE SEQUENCE [GENOMIC DNA]</scope>
    <scope>FUNCTION</scope>
    <scope>CATALYTIC ACTIVITY</scope>
    <scope>COFACTOR</scope>
    <scope>PATHWAY</scope>
</reference>
<reference key="2">
    <citation type="journal article" date="1997" name="Nature">
        <title>The nucleotide sequence of Saccharomyces cerevisiae chromosome XIV and its evolutionary implications.</title>
        <authorList>
            <person name="Philippsen P."/>
            <person name="Kleine K."/>
            <person name="Poehlmann R."/>
            <person name="Duesterhoeft A."/>
            <person name="Hamberg K."/>
            <person name="Hegemann J.H."/>
            <person name="Obermaier B."/>
            <person name="Urrestarazu L.A."/>
            <person name="Aert R."/>
            <person name="Albermann K."/>
            <person name="Altmann R."/>
            <person name="Andre B."/>
            <person name="Baladron V."/>
            <person name="Ballesta J.P.G."/>
            <person name="Becam A.-M."/>
            <person name="Beinhauer J.D."/>
            <person name="Boskovic J."/>
            <person name="Buitrago M.J."/>
            <person name="Bussereau F."/>
            <person name="Coster F."/>
            <person name="Crouzet M."/>
            <person name="D'Angelo M."/>
            <person name="Dal Pero F."/>
            <person name="De Antoni A."/>
            <person name="del Rey F."/>
            <person name="Doignon F."/>
            <person name="Domdey H."/>
            <person name="Dubois E."/>
            <person name="Fiedler T.A."/>
            <person name="Fleig U."/>
            <person name="Floeth M."/>
            <person name="Fritz C."/>
            <person name="Gaillardin C."/>
            <person name="Garcia-Cantalejo J.M."/>
            <person name="Glansdorff N."/>
            <person name="Goffeau A."/>
            <person name="Gueldener U."/>
            <person name="Herbert C.J."/>
            <person name="Heumann K."/>
            <person name="Heuss-Neitzel D."/>
            <person name="Hilbert H."/>
            <person name="Hinni K."/>
            <person name="Iraqui Houssaini I."/>
            <person name="Jacquet M."/>
            <person name="Jimenez A."/>
            <person name="Jonniaux J.-L."/>
            <person name="Karpfinger-Hartl L."/>
            <person name="Lanfranchi G."/>
            <person name="Lepingle A."/>
            <person name="Levesque H."/>
            <person name="Lyck R."/>
            <person name="Maftahi M."/>
            <person name="Mallet L."/>
            <person name="Maurer C.T.C."/>
            <person name="Messenguy F."/>
            <person name="Mewes H.-W."/>
            <person name="Moestl D."/>
            <person name="Nasr F."/>
            <person name="Nicaud J.-M."/>
            <person name="Niedenthal R.K."/>
            <person name="Pandolfo D."/>
            <person name="Pierard A."/>
            <person name="Piravandi E."/>
            <person name="Planta R.J."/>
            <person name="Pohl T.M."/>
            <person name="Purnelle B."/>
            <person name="Rebischung C."/>
            <person name="Remacha M.A."/>
            <person name="Revuelta J.L."/>
            <person name="Rinke M."/>
            <person name="Saiz J.E."/>
            <person name="Sartorello F."/>
            <person name="Scherens B."/>
            <person name="Sen-Gupta M."/>
            <person name="Soler-Mira A."/>
            <person name="Urbanus J.H.M."/>
            <person name="Valle G."/>
            <person name="Van Dyck L."/>
            <person name="Verhasselt P."/>
            <person name="Vierendeels F."/>
            <person name="Vissers S."/>
            <person name="Voet M."/>
            <person name="Volckaert G."/>
            <person name="Wach A."/>
            <person name="Wambutt R."/>
            <person name="Wedler H."/>
            <person name="Zollner A."/>
            <person name="Hani J."/>
        </authorList>
    </citation>
    <scope>NUCLEOTIDE SEQUENCE [LARGE SCALE GENOMIC DNA]</scope>
    <source>
        <strain>ATCC 204508 / S288c</strain>
    </source>
</reference>
<reference key="3">
    <citation type="journal article" date="2014" name="G3 (Bethesda)">
        <title>The reference genome sequence of Saccharomyces cerevisiae: Then and now.</title>
        <authorList>
            <person name="Engel S.R."/>
            <person name="Dietrich F.S."/>
            <person name="Fisk D.G."/>
            <person name="Binkley G."/>
            <person name="Balakrishnan R."/>
            <person name="Costanzo M.C."/>
            <person name="Dwight S.S."/>
            <person name="Hitz B.C."/>
            <person name="Karra K."/>
            <person name="Nash R.S."/>
            <person name="Weng S."/>
            <person name="Wong E.D."/>
            <person name="Lloyd P."/>
            <person name="Skrzypek M.S."/>
            <person name="Miyasato S.R."/>
            <person name="Simison M."/>
            <person name="Cherry J.M."/>
        </authorList>
    </citation>
    <scope>GENOME REANNOTATION</scope>
    <source>
        <strain>ATCC 204508 / S288c</strain>
    </source>
</reference>
<reference key="4">
    <citation type="journal article" date="2007" name="Genome Res.">
        <title>Approaching a complete repository of sequence-verified protein-encoding clones for Saccharomyces cerevisiae.</title>
        <authorList>
            <person name="Hu Y."/>
            <person name="Rolfs A."/>
            <person name="Bhullar B."/>
            <person name="Murthy T.V.S."/>
            <person name="Zhu C."/>
            <person name="Berger M.F."/>
            <person name="Camargo A.A."/>
            <person name="Kelley F."/>
            <person name="McCarron S."/>
            <person name="Jepson D."/>
            <person name="Richardson A."/>
            <person name="Raphael J."/>
            <person name="Moreira D."/>
            <person name="Taycher E."/>
            <person name="Zuo D."/>
            <person name="Mohr S."/>
            <person name="Kane M.F."/>
            <person name="Williamson J."/>
            <person name="Simpson A.J.G."/>
            <person name="Bulyk M.L."/>
            <person name="Harlow E."/>
            <person name="Marsischky G."/>
            <person name="Kolodner R.D."/>
            <person name="LaBaer J."/>
        </authorList>
    </citation>
    <scope>NUCLEOTIDE SEQUENCE [GENOMIC DNA]</scope>
    <source>
        <strain>ATCC 204508 / S288c</strain>
    </source>
</reference>
<reference key="5">
    <citation type="journal article" date="2006" name="J. Proteome Res.">
        <title>Toward the complete yeast mitochondrial proteome: multidimensional separation techniques for mitochondrial proteomics.</title>
        <authorList>
            <person name="Reinders J."/>
            <person name="Zahedi R.P."/>
            <person name="Pfanner N."/>
            <person name="Meisinger C."/>
            <person name="Sickmann A."/>
        </authorList>
    </citation>
    <scope>SUBCELLULAR LOCATION [LARGE SCALE ANALYSIS]</scope>
    <scope>IDENTIFICATION BY MASS SPECTROMETRY</scope>
</reference>
<reference key="6">
    <citation type="journal article" date="2014" name="Biochim. Biophys. Acta">
        <title>Coenzyme Q supplementation or over-expression of the yeast Coq8 putative kinase stabilizes multi-subunit Coq polypeptide complexes in yeast coq null mutants.</title>
        <authorList>
            <person name="He C.H."/>
            <person name="Xie L.X."/>
            <person name="Allan C.M."/>
            <person name="Tran U.C."/>
            <person name="Clarke C.F."/>
        </authorList>
    </citation>
    <scope>SUBCELLULAR LOCATION</scope>
</reference>
<evidence type="ECO:0000255" key="1">
    <source>
        <dbReference type="HAMAP-Rule" id="MF_03189"/>
    </source>
</evidence>
<evidence type="ECO:0000269" key="2">
    <source>
    </source>
</evidence>
<evidence type="ECO:0000269" key="3">
    <source>
    </source>
</evidence>
<evidence type="ECO:0000269" key="4">
    <source>
    </source>
</evidence>
<evidence type="ECO:0000303" key="5">
    <source>
    </source>
</evidence>
<evidence type="ECO:0000305" key="6"/>
<evidence type="ECO:0000305" key="7">
    <source>
    </source>
</evidence>
<evidence type="ECO:0000312" key="8">
    <source>
        <dbReference type="SGD" id="S000005324"/>
    </source>
</evidence>
<name>COQ2_YEAST</name>